<feature type="propeptide" id="PRO_0000443605" evidence="2">
    <location>
        <begin position="1"/>
        <end position="10"/>
    </location>
</feature>
<feature type="peptide" id="PRO_0000443606" description="Beta-amanitin" evidence="2">
    <location>
        <begin position="11"/>
        <end position="18"/>
    </location>
</feature>
<feature type="propeptide" id="PRO_0000443607" evidence="2">
    <location>
        <begin position="19"/>
        <end position="33"/>
    </location>
</feature>
<feature type="cross-link" description="Cyclopeptide (Ile-Pro)" evidence="2">
    <location>
        <begin position="11"/>
        <end position="18"/>
    </location>
</feature>
<feature type="cross-link" description="2'-cysteinyl-6'-hydroxytryptophan sulfoxide (Trp-Cys)" evidence="3">
    <location>
        <begin position="12"/>
        <end position="16"/>
    </location>
</feature>
<protein>
    <recommendedName>
        <fullName evidence="5">Beta-amanitin proprotein</fullName>
    </recommendedName>
    <component>
        <recommendedName>
            <fullName evidence="5">Beta-amanitin</fullName>
        </recommendedName>
    </component>
</protein>
<keyword id="KW-0883">Thioether bond</keyword>
<keyword id="KW-0800">Toxin</keyword>
<sequence length="33" mass="3419">MSDINATRLPIWGIGCDPCVGDDVAALTTRGEA</sequence>
<dbReference type="EMBL" id="KF552092">
    <property type="protein sequence ID" value="AHB18720.1"/>
    <property type="molecule type" value="Genomic_DNA"/>
</dbReference>
<dbReference type="GO" id="GO:0090729">
    <property type="term" value="F:toxin activity"/>
    <property type="evidence" value="ECO:0007669"/>
    <property type="project" value="UniProtKB-KW"/>
</dbReference>
<dbReference type="InterPro" id="IPR027582">
    <property type="entry name" value="Amanitin/phalloidin"/>
</dbReference>
<dbReference type="NCBIfam" id="TIGR04309">
    <property type="entry name" value="amanitin"/>
    <property type="match status" value="1"/>
</dbReference>
<dbReference type="Pfam" id="PF24112">
    <property type="entry name" value="Amanitin"/>
    <property type="match status" value="1"/>
</dbReference>
<accession>A0A023IWM7</accession>
<name>BAMAT_AMARI</name>
<comment type="function">
    <text evidence="7">Toxin belonging to the bicyclic octapeptides amatoxins that acts by binding non-competitively to RNA polymerase II and greatly slowing the elongation of transcripts from target promoters (PubMed:24613547).</text>
</comment>
<comment type="PTM">
    <text evidence="1 7">Processed by the macrocyclase-peptidase enzyme POPB to yield a toxic cyclic decapeptide (PubMed:24613547). POPB first removes 10 residues from the N-terminus (By similarity). Conformational trapping of the remaining peptide forces the enzyme to release this intermediate rather than proceed to macrocyclization (By similarity). The enzyme rebinds the remaining peptide in a different conformation and catalyzes macrocyclization of the N-terminal 8 residues (By similarity).</text>
</comment>
<comment type="miscellaneous">
    <text evidence="4">The typical symptoms of amatoxin poisoning are gastro-intestinal distress beginning 6-12 hours after ingestion, a remission phase lasting 12-24 hours, and progressive loss of liver function culminating in death within 3-5 days (PubMed:12475187). One of the few effective treatments is liver transplantation (PubMed:12475187).</text>
</comment>
<comment type="similarity">
    <text evidence="6">Belongs to the MSDIN fungal toxin family.</text>
</comment>
<reference key="1">
    <citation type="journal article" date="2014" name="Toxicon">
        <title>The molecular diversity of toxin gene families in lethal Amanita mushrooms.</title>
        <authorList>
            <person name="Li P."/>
            <person name="Deng W."/>
            <person name="Li T."/>
        </authorList>
    </citation>
    <scope>NUCLEOTIDE SEQUENCE [GENOMIC DNA]</scope>
    <scope>FUNCTION</scope>
</reference>
<reference key="2">
    <citation type="journal article" date="2002" name="J. Toxicol. Clin. Toxicol.">
        <title>Treatment of amatoxin poisoning: 20-year retrospective analysis.</title>
        <authorList>
            <person name="Enjalbert F."/>
            <person name="Rapior S."/>
            <person name="Nouguier-Soule J."/>
            <person name="Guillon S."/>
            <person name="Amouroux N."/>
            <person name="Cabot C."/>
        </authorList>
    </citation>
    <scope>REVIEW ON TOXICITY</scope>
</reference>
<evidence type="ECO:0000250" key="1">
    <source>
        <dbReference type="UniProtKB" id="A0A067SLB9"/>
    </source>
</evidence>
<evidence type="ECO:0000250" key="2">
    <source>
        <dbReference type="UniProtKB" id="A8W7M4"/>
    </source>
</evidence>
<evidence type="ECO:0000250" key="3">
    <source>
        <dbReference type="UniProtKB" id="P85421"/>
    </source>
</evidence>
<evidence type="ECO:0000303" key="4">
    <source>
    </source>
</evidence>
<evidence type="ECO:0000303" key="5">
    <source>
    </source>
</evidence>
<evidence type="ECO:0000305" key="6"/>
<evidence type="ECO:0000305" key="7">
    <source>
    </source>
</evidence>
<proteinExistence type="inferred from homology"/>
<organism>
    <name type="scientific">Amanita rimosa</name>
    <dbReference type="NCBI Taxonomy" id="580330"/>
    <lineage>
        <taxon>Eukaryota</taxon>
        <taxon>Fungi</taxon>
        <taxon>Dikarya</taxon>
        <taxon>Basidiomycota</taxon>
        <taxon>Agaricomycotina</taxon>
        <taxon>Agaricomycetes</taxon>
        <taxon>Agaricomycetidae</taxon>
        <taxon>Agaricales</taxon>
        <taxon>Pluteineae</taxon>
        <taxon>Amanitaceae</taxon>
        <taxon>Amanita</taxon>
    </lineage>
</organism>